<dbReference type="EC" id="2.4.99.28" evidence="2"/>
<dbReference type="EC" id="3.4.16.4" evidence="2"/>
<dbReference type="EMBL" id="AE003852">
    <property type="protein sequence ID" value="AAF95776.1"/>
    <property type="status" value="ALT_INIT"/>
    <property type="molecule type" value="Genomic_DNA"/>
</dbReference>
<dbReference type="PIR" id="B82051">
    <property type="entry name" value="B82051"/>
</dbReference>
<dbReference type="RefSeq" id="NP_232263.1">
    <property type="nucleotide sequence ID" value="NC_002505.1"/>
</dbReference>
<dbReference type="RefSeq" id="WP_000668733.1">
    <property type="nucleotide sequence ID" value="NZ_LT906614.1"/>
</dbReference>
<dbReference type="SMR" id="Q9KNU5"/>
<dbReference type="STRING" id="243277.VC_2635"/>
<dbReference type="CAZy" id="GT51">
    <property type="family name" value="Glycosyltransferase Family 51"/>
</dbReference>
<dbReference type="DNASU" id="2615652"/>
<dbReference type="EnsemblBacteria" id="AAF95776">
    <property type="protein sequence ID" value="AAF95776"/>
    <property type="gene ID" value="VC_2635"/>
</dbReference>
<dbReference type="KEGG" id="vch:VC_2635"/>
<dbReference type="PATRIC" id="fig|243277.26.peg.2513"/>
<dbReference type="eggNOG" id="COG5009">
    <property type="taxonomic scope" value="Bacteria"/>
</dbReference>
<dbReference type="HOGENOM" id="CLU_006354_2_4_6"/>
<dbReference type="UniPathway" id="UPA00219"/>
<dbReference type="Proteomes" id="UP000000584">
    <property type="component" value="Chromosome 1"/>
</dbReference>
<dbReference type="GO" id="GO:0030288">
    <property type="term" value="C:outer membrane-bounded periplasmic space"/>
    <property type="evidence" value="ECO:0000318"/>
    <property type="project" value="GO_Central"/>
</dbReference>
<dbReference type="GO" id="GO:0005886">
    <property type="term" value="C:plasma membrane"/>
    <property type="evidence" value="ECO:0007669"/>
    <property type="project" value="UniProtKB-SubCell"/>
</dbReference>
<dbReference type="GO" id="GO:0008658">
    <property type="term" value="F:penicillin binding"/>
    <property type="evidence" value="ECO:0007669"/>
    <property type="project" value="InterPro"/>
</dbReference>
<dbReference type="GO" id="GO:0008955">
    <property type="term" value="F:peptidoglycan glycosyltransferase activity"/>
    <property type="evidence" value="ECO:0000318"/>
    <property type="project" value="GO_Central"/>
</dbReference>
<dbReference type="GO" id="GO:0009002">
    <property type="term" value="F:serine-type D-Ala-D-Ala carboxypeptidase activity"/>
    <property type="evidence" value="ECO:0007669"/>
    <property type="project" value="UniProtKB-EC"/>
</dbReference>
<dbReference type="GO" id="GO:0071555">
    <property type="term" value="P:cell wall organization"/>
    <property type="evidence" value="ECO:0007669"/>
    <property type="project" value="UniProtKB-KW"/>
</dbReference>
<dbReference type="GO" id="GO:0009252">
    <property type="term" value="P:peptidoglycan biosynthetic process"/>
    <property type="evidence" value="ECO:0000318"/>
    <property type="project" value="GO_Central"/>
</dbReference>
<dbReference type="GO" id="GO:0006508">
    <property type="term" value="P:proteolysis"/>
    <property type="evidence" value="ECO:0007669"/>
    <property type="project" value="UniProtKB-KW"/>
</dbReference>
<dbReference type="GO" id="GO:0008360">
    <property type="term" value="P:regulation of cell shape"/>
    <property type="evidence" value="ECO:0007669"/>
    <property type="project" value="UniProtKB-KW"/>
</dbReference>
<dbReference type="GO" id="GO:0046677">
    <property type="term" value="P:response to antibiotic"/>
    <property type="evidence" value="ECO:0007669"/>
    <property type="project" value="UniProtKB-KW"/>
</dbReference>
<dbReference type="FunFam" id="3.40.710.10:FF:000010">
    <property type="entry name" value="Penicillin-binding protein 1A"/>
    <property type="match status" value="1"/>
</dbReference>
<dbReference type="FunFam" id="1.10.3810.10:FF:000003">
    <property type="entry name" value="Penicillin-binding protein 1a"/>
    <property type="match status" value="1"/>
</dbReference>
<dbReference type="Gene3D" id="1.10.3810.10">
    <property type="entry name" value="Biosynthetic peptidoglycan transglycosylase-like"/>
    <property type="match status" value="1"/>
</dbReference>
<dbReference type="Gene3D" id="3.40.710.10">
    <property type="entry name" value="DD-peptidase/beta-lactamase superfamily"/>
    <property type="match status" value="2"/>
</dbReference>
<dbReference type="InterPro" id="IPR012338">
    <property type="entry name" value="Beta-lactam/transpept-like"/>
</dbReference>
<dbReference type="InterPro" id="IPR001264">
    <property type="entry name" value="Glyco_trans_51"/>
</dbReference>
<dbReference type="InterPro" id="IPR050396">
    <property type="entry name" value="Glycosyltr_51/Transpeptidase"/>
</dbReference>
<dbReference type="InterPro" id="IPR023346">
    <property type="entry name" value="Lysozyme-like_dom_sf"/>
</dbReference>
<dbReference type="InterPro" id="IPR036950">
    <property type="entry name" value="PBP_transglycosylase"/>
</dbReference>
<dbReference type="InterPro" id="IPR031376">
    <property type="entry name" value="PCB_OB"/>
</dbReference>
<dbReference type="InterPro" id="IPR001460">
    <property type="entry name" value="PCN-bd_Tpept"/>
</dbReference>
<dbReference type="NCBIfam" id="TIGR02074">
    <property type="entry name" value="PBP_1a_fam"/>
    <property type="match status" value="1"/>
</dbReference>
<dbReference type="PANTHER" id="PTHR32282">
    <property type="entry name" value="BINDING PROTEIN TRANSPEPTIDASE, PUTATIVE-RELATED"/>
    <property type="match status" value="1"/>
</dbReference>
<dbReference type="PANTHER" id="PTHR32282:SF27">
    <property type="entry name" value="PENICILLIN-BINDING PROTEIN 1A"/>
    <property type="match status" value="1"/>
</dbReference>
<dbReference type="Pfam" id="PF17092">
    <property type="entry name" value="PCB_OB"/>
    <property type="match status" value="1"/>
</dbReference>
<dbReference type="Pfam" id="PF00912">
    <property type="entry name" value="Transgly"/>
    <property type="match status" value="1"/>
</dbReference>
<dbReference type="Pfam" id="PF00905">
    <property type="entry name" value="Transpeptidase"/>
    <property type="match status" value="1"/>
</dbReference>
<dbReference type="SUPFAM" id="SSF56601">
    <property type="entry name" value="beta-lactamase/transpeptidase-like"/>
    <property type="match status" value="1"/>
</dbReference>
<dbReference type="SUPFAM" id="SSF53955">
    <property type="entry name" value="Lysozyme-like"/>
    <property type="match status" value="1"/>
</dbReference>
<reference key="1">
    <citation type="journal article" date="2000" name="Nature">
        <title>DNA sequence of both chromosomes of the cholera pathogen Vibrio cholerae.</title>
        <authorList>
            <person name="Heidelberg J.F."/>
            <person name="Eisen J.A."/>
            <person name="Nelson W.C."/>
            <person name="Clayton R.A."/>
            <person name="Gwinn M.L."/>
            <person name="Dodson R.J."/>
            <person name="Haft D.H."/>
            <person name="Hickey E.K."/>
            <person name="Peterson J.D."/>
            <person name="Umayam L.A."/>
            <person name="Gill S.R."/>
            <person name="Nelson K.E."/>
            <person name="Read T.D."/>
            <person name="Tettelin H."/>
            <person name="Richardson D.L."/>
            <person name="Ermolaeva M.D."/>
            <person name="Vamathevan J.J."/>
            <person name="Bass S."/>
            <person name="Qin H."/>
            <person name="Dragoi I."/>
            <person name="Sellers P."/>
            <person name="McDonald L.A."/>
            <person name="Utterback T.R."/>
            <person name="Fleischmann R.D."/>
            <person name="Nierman W.C."/>
            <person name="White O."/>
            <person name="Salzberg S.L."/>
            <person name="Smith H.O."/>
            <person name="Colwell R.R."/>
            <person name="Mekalanos J.J."/>
            <person name="Venter J.C."/>
            <person name="Fraser C.M."/>
        </authorList>
    </citation>
    <scope>NUCLEOTIDE SEQUENCE [LARGE SCALE GENOMIC DNA]</scope>
    <source>
        <strain>ATCC 39315 / El Tor Inaba N16961</strain>
    </source>
</reference>
<accession>Q9KNU5</accession>
<evidence type="ECO:0000250" key="1"/>
<evidence type="ECO:0000250" key="2">
    <source>
        <dbReference type="UniProtKB" id="P02918"/>
    </source>
</evidence>
<evidence type="ECO:0000250" key="3">
    <source>
        <dbReference type="UniProtKB" id="P02919"/>
    </source>
</evidence>
<evidence type="ECO:0000255" key="4"/>
<evidence type="ECO:0000305" key="5"/>
<feature type="chain" id="PRO_0000083175" description="Penicillin-binding protein 1A">
    <location>
        <begin position="1"/>
        <end position="825"/>
    </location>
</feature>
<feature type="topological domain" description="Cytoplasmic" evidence="4">
    <location>
        <begin position="1"/>
        <end position="6"/>
    </location>
</feature>
<feature type="transmembrane region" description="Helical; Signal-anchor for type II membrane protein" evidence="4">
    <location>
        <begin position="7"/>
        <end position="27"/>
    </location>
</feature>
<feature type="topological domain" description="Periplasmic" evidence="4">
    <location>
        <begin position="28"/>
        <end position="825"/>
    </location>
</feature>
<feature type="region of interest" description="Transglycosylase">
    <location>
        <begin position="48"/>
        <end position="216"/>
    </location>
</feature>
<feature type="region of interest" description="Transpeptidase">
    <location>
        <begin position="413"/>
        <end position="752"/>
    </location>
</feature>
<feature type="active site" description="Proton donor; for transglycosylase activity" evidence="3">
    <location>
        <position position="86"/>
    </location>
</feature>
<feature type="active site" description="Acyl-ester intermediate; for transpeptidase activity" evidence="3">
    <location>
        <position position="471"/>
    </location>
</feature>
<protein>
    <recommendedName>
        <fullName>Penicillin-binding protein 1A</fullName>
        <shortName>PBP-1a</shortName>
        <shortName>PBP1a</shortName>
    </recommendedName>
    <domain>
        <recommendedName>
            <fullName>Penicillin-insensitive transglycosylase</fullName>
            <ecNumber evidence="2">2.4.99.28</ecNumber>
        </recommendedName>
        <alternativeName>
            <fullName>Peptidoglycan TGase</fullName>
        </alternativeName>
    </domain>
    <domain>
        <recommendedName>
            <fullName>Penicillin-sensitive transpeptidase</fullName>
            <ecNumber evidence="2">3.4.16.4</ecNumber>
        </recommendedName>
        <alternativeName>
            <fullName>DD-transpeptidase</fullName>
        </alternativeName>
    </domain>
</protein>
<gene>
    <name type="primary">mrcA</name>
    <name type="synonym">ponA</name>
    <name type="ordered locus">VC_2635</name>
</gene>
<proteinExistence type="inferred from homology"/>
<comment type="function">
    <text evidence="1">Cell wall formation. Synthesis of cross-linked peptidoglycan from the lipid intermediates. The enzyme has a penicillin-insensitive transglycosylase N-terminal domain (formation of linear glycan strands) and a penicillin-sensitive transpeptidase C-terminal domain (cross-linking of the peptide subunits).</text>
</comment>
<comment type="catalytic activity">
    <reaction evidence="2">
        <text>[GlcNAc-(1-&gt;4)-Mur2Ac(oyl-L-Ala-gamma-D-Glu-L-Lys-D-Ala-D-Ala)](n)-di-trans,octa-cis-undecaprenyl diphosphate + beta-D-GlcNAc-(1-&gt;4)-Mur2Ac(oyl-L-Ala-gamma-D-Glu-L-Lys-D-Ala-D-Ala)-di-trans,octa-cis-undecaprenyl diphosphate = [GlcNAc-(1-&gt;4)-Mur2Ac(oyl-L-Ala-gamma-D-Glu-L-Lys-D-Ala-D-Ala)](n+1)-di-trans,octa-cis-undecaprenyl diphosphate + di-trans,octa-cis-undecaprenyl diphosphate + H(+)</text>
        <dbReference type="Rhea" id="RHEA:23708"/>
        <dbReference type="Rhea" id="RHEA-COMP:9602"/>
        <dbReference type="Rhea" id="RHEA-COMP:9603"/>
        <dbReference type="ChEBI" id="CHEBI:15378"/>
        <dbReference type="ChEBI" id="CHEBI:58405"/>
        <dbReference type="ChEBI" id="CHEBI:60033"/>
        <dbReference type="ChEBI" id="CHEBI:78435"/>
        <dbReference type="EC" id="2.4.99.28"/>
    </reaction>
</comment>
<comment type="catalytic activity">
    <reaction evidence="2">
        <text>Preferential cleavage: (Ac)2-L-Lys-D-Ala-|-D-Ala. Also transpeptidation of peptidyl-alanyl moieties that are N-acyl substituents of D-alanine.</text>
        <dbReference type="EC" id="3.4.16.4"/>
    </reaction>
</comment>
<comment type="pathway">
    <text>Cell wall biogenesis; peptidoglycan biosynthesis.</text>
</comment>
<comment type="subcellular location">
    <subcellularLocation>
        <location evidence="1">Cell inner membrane</location>
        <topology evidence="1">Single-pass type II membrane protein</topology>
    </subcellularLocation>
</comment>
<comment type="similarity">
    <text evidence="5">In the N-terminal section; belongs to the glycosyltransferase 51 family.</text>
</comment>
<comment type="similarity">
    <text evidence="5">In the C-terminal section; belongs to the transpeptidase family.</text>
</comment>
<comment type="sequence caution" evidence="5">
    <conflict type="erroneous initiation">
        <sequence resource="EMBL-CDS" id="AAF95776"/>
    </conflict>
</comment>
<organism>
    <name type="scientific">Vibrio cholerae serotype O1 (strain ATCC 39315 / El Tor Inaba N16961)</name>
    <dbReference type="NCBI Taxonomy" id="243277"/>
    <lineage>
        <taxon>Bacteria</taxon>
        <taxon>Pseudomonadati</taxon>
        <taxon>Pseudomonadota</taxon>
        <taxon>Gammaproteobacteria</taxon>
        <taxon>Vibrionales</taxon>
        <taxon>Vibrionaceae</taxon>
        <taxon>Vibrio</taxon>
    </lineage>
</organism>
<keyword id="KW-0046">Antibiotic resistance</keyword>
<keyword id="KW-0121">Carboxypeptidase</keyword>
<keyword id="KW-0997">Cell inner membrane</keyword>
<keyword id="KW-1003">Cell membrane</keyword>
<keyword id="KW-0133">Cell shape</keyword>
<keyword id="KW-0961">Cell wall biogenesis/degradation</keyword>
<keyword id="KW-0328">Glycosyltransferase</keyword>
<keyword id="KW-0378">Hydrolase</keyword>
<keyword id="KW-0472">Membrane</keyword>
<keyword id="KW-0511">Multifunctional enzyme</keyword>
<keyword id="KW-0573">Peptidoglycan synthesis</keyword>
<keyword id="KW-0645">Protease</keyword>
<keyword id="KW-1185">Reference proteome</keyword>
<keyword id="KW-0735">Signal-anchor</keyword>
<keyword id="KW-0808">Transferase</keyword>
<keyword id="KW-0812">Transmembrane</keyword>
<keyword id="KW-1133">Transmembrane helix</keyword>
<sequence length="825" mass="91987">MKFIKRLLVFSLICIILGVTTIFGFYFYVKSDLPDVATLRDVQLQTPMQVFSQDGKLIAQFGEKRRIPLKLEEMPKELIEAVIATEDSRYYEHYGFDPIGITRAAFAVLASGSASQGASTITQQLARNFFLSNEKKVMRKVKEIFIAIHIEQLLSKQEILELYLNKIYLGYRSYGVGAAAQAYFGKEVKDLTLGEIALIAGLPKAPSTMNPIYSVERATNRRNVVLQRMLDEKYITKAEYDAARAEPVLPKYHGAEIELNAPYVAEIARAWMVERYGEEAAYTSGMNVYTTVDSKLQRAANQAAINNLLAYDERHGYRGAEKELWQVNQPAWSSTQLSEYLSNEPTYGDMFPAAVLSVEEKSAQVWVKSYGVQTIAWEDMNWARRFINDDRQGPLPKSANEFLAAGQQIWVRPRTQDGAITAWKLTQVPNANTAFVAMNPENGAVTALVGGFNFVHNKFNRATQSVRQVGSSIKPFIYSAALNKGLTLATLINDAPINQWDESQGTAWRPKNSPPTYTGPTRLRIGLAQSKNVMAVRVLREVGLDETREYLTRFGFKLDQLPRSETIALGAGSLTPVQMAQGFSVFANNGYFVEPFYISRVENPFGNIEFSAEPKVVCHRECSSELDEFAEQDAASPYAPKVISEQNAFLTREMLYSNIWGGGEWSSDTGWNGTGWRAQALKRRDIGGKTGTTNDSKDAWYNGYAPGIVGVAWVGFDDHSRNLGKTAPNRNIEDDVSGAESGGKTALPAWVEFMSLALQDVPVQQKAVPNNIARVRIDRDTGLLTNKLDSSSMFEYFEAGTEPTEYVSEHVNESIYSTSSGEELF</sequence>
<name>PBPA_VIBCH</name>